<sequence length="539" mass="57586">MNFQIADFTRLIPEFLLLAIAAMVLLGDVLTRWSKGKEALNDRTEEAISMTLMGLGLAFVMVLIQGGFFSWMQFGDWKFYDFSIFQNLRSSGLDGSILGGAFVVDPLTHIGRLVFIGAAFVTVILTSKAKPSNNPAEFYALILFATLGMIFMTAGGELIMIYLGIELTSIPLYVLAGYFRRNPVSTEAGAKYYIFGALSSAILLFGMSLLLGLTLMNGQTMTTTPTSLRSVATAVELAFANPEGPSQGVAILALLFILAGMAYKVAIVPFHAWSPDVYQGAPTSMTAFISTASKTAGFFLLYRVLVTGFGAPSILGTAAIGTSTSFGGWTSLIAILAALTMLVGNLAALPQTNAKRMLAYSSIAQAGFLMLGLVGTQRDSGISLLMYLIAYTVTNLSAFGILALVEDAVGGTDFSNLNGLGRRAPGLALLLTVAILSLAGIPPLSGFFVKFYVFIAAWQEGAKWLVIFAVSNTVISLYYYLRFLKAVYFAPAETDEPIKVGFGPGIVMTAITLLIFGLGIVPTWLYGVLEQATIRIAAQ</sequence>
<organism>
    <name type="scientific">Herpetosiphon aurantiacus (strain ATCC 23779 / DSM 785 / 114-95)</name>
    <dbReference type="NCBI Taxonomy" id="316274"/>
    <lineage>
        <taxon>Bacteria</taxon>
        <taxon>Bacillati</taxon>
        <taxon>Chloroflexota</taxon>
        <taxon>Chloroflexia</taxon>
        <taxon>Herpetosiphonales</taxon>
        <taxon>Herpetosiphonaceae</taxon>
        <taxon>Herpetosiphon</taxon>
    </lineage>
</organism>
<protein>
    <recommendedName>
        <fullName evidence="1">NADH-quinone oxidoreductase subunit N 2</fullName>
        <ecNumber evidence="1">7.1.1.-</ecNumber>
    </recommendedName>
    <alternativeName>
        <fullName evidence="1">NADH dehydrogenase I subunit N 2</fullName>
    </alternativeName>
    <alternativeName>
        <fullName evidence="1">NDH-1 subunit N 2</fullName>
    </alternativeName>
</protein>
<name>NUON2_HERA2</name>
<proteinExistence type="inferred from homology"/>
<gene>
    <name evidence="1" type="primary">nuoN2</name>
    <name type="ordered locus">Haur_4991</name>
</gene>
<keyword id="KW-1003">Cell membrane</keyword>
<keyword id="KW-0472">Membrane</keyword>
<keyword id="KW-0520">NAD</keyword>
<keyword id="KW-0874">Quinone</keyword>
<keyword id="KW-1278">Translocase</keyword>
<keyword id="KW-0812">Transmembrane</keyword>
<keyword id="KW-1133">Transmembrane helix</keyword>
<keyword id="KW-0813">Transport</keyword>
<keyword id="KW-0830">Ubiquinone</keyword>
<comment type="function">
    <text evidence="1">NDH-1 shuttles electrons from NADH, via FMN and iron-sulfur (Fe-S) centers, to quinones in the respiratory chain. The immediate electron acceptor for the enzyme in this species is believed to be ubiquinone. Couples the redox reaction to proton translocation (for every two electrons transferred, four hydrogen ions are translocated across the cytoplasmic membrane), and thus conserves the redox energy in a proton gradient.</text>
</comment>
<comment type="catalytic activity">
    <reaction evidence="1">
        <text>a quinone + NADH + 5 H(+)(in) = a quinol + NAD(+) + 4 H(+)(out)</text>
        <dbReference type="Rhea" id="RHEA:57888"/>
        <dbReference type="ChEBI" id="CHEBI:15378"/>
        <dbReference type="ChEBI" id="CHEBI:24646"/>
        <dbReference type="ChEBI" id="CHEBI:57540"/>
        <dbReference type="ChEBI" id="CHEBI:57945"/>
        <dbReference type="ChEBI" id="CHEBI:132124"/>
    </reaction>
</comment>
<comment type="subunit">
    <text evidence="1">NDH-1 is composed of 14 different subunits. Subunits NuoA, H, J, K, L, M, N constitute the membrane sector of the complex.</text>
</comment>
<comment type="subcellular location">
    <subcellularLocation>
        <location evidence="1">Cell membrane</location>
        <topology evidence="1">Multi-pass membrane protein</topology>
    </subcellularLocation>
</comment>
<comment type="similarity">
    <text evidence="1">Belongs to the complex I subunit 2 family.</text>
</comment>
<feature type="chain" id="PRO_0000391163" description="NADH-quinone oxidoreductase subunit N 2">
    <location>
        <begin position="1"/>
        <end position="539"/>
    </location>
</feature>
<feature type="transmembrane region" description="Helical" evidence="1">
    <location>
        <begin position="11"/>
        <end position="31"/>
    </location>
</feature>
<feature type="transmembrane region" description="Helical" evidence="1">
    <location>
        <begin position="52"/>
        <end position="72"/>
    </location>
</feature>
<feature type="transmembrane region" description="Helical" evidence="1">
    <location>
        <begin position="106"/>
        <end position="126"/>
    </location>
</feature>
<feature type="transmembrane region" description="Helical" evidence="1">
    <location>
        <begin position="141"/>
        <end position="161"/>
    </location>
</feature>
<feature type="transmembrane region" description="Helical" evidence="1">
    <location>
        <begin position="193"/>
        <end position="213"/>
    </location>
</feature>
<feature type="transmembrane region" description="Helical" evidence="1">
    <location>
        <begin position="248"/>
        <end position="268"/>
    </location>
</feature>
<feature type="transmembrane region" description="Helical" evidence="1">
    <location>
        <begin position="296"/>
        <end position="316"/>
    </location>
</feature>
<feature type="transmembrane region" description="Helical" evidence="1">
    <location>
        <begin position="329"/>
        <end position="349"/>
    </location>
</feature>
<feature type="transmembrane region" description="Helical" evidence="1">
    <location>
        <begin position="357"/>
        <end position="377"/>
    </location>
</feature>
<feature type="transmembrane region" description="Helical" evidence="1">
    <location>
        <begin position="385"/>
        <end position="405"/>
    </location>
</feature>
<feature type="transmembrane region" description="Helical" evidence="1">
    <location>
        <begin position="429"/>
        <end position="449"/>
    </location>
</feature>
<feature type="transmembrane region" description="Helical" evidence="1">
    <location>
        <begin position="462"/>
        <end position="484"/>
    </location>
</feature>
<feature type="transmembrane region" description="Helical" evidence="1">
    <location>
        <begin position="500"/>
        <end position="520"/>
    </location>
</feature>
<accession>A9B488</accession>
<dbReference type="EC" id="7.1.1.-" evidence="1"/>
<dbReference type="EMBL" id="CP000875">
    <property type="protein sequence ID" value="ABX07621.1"/>
    <property type="molecule type" value="Genomic_DNA"/>
</dbReference>
<dbReference type="SMR" id="A9B488"/>
<dbReference type="STRING" id="316274.Haur_4991"/>
<dbReference type="KEGG" id="hau:Haur_4991"/>
<dbReference type="eggNOG" id="COG1007">
    <property type="taxonomic scope" value="Bacteria"/>
</dbReference>
<dbReference type="HOGENOM" id="CLU_007100_1_3_0"/>
<dbReference type="InParanoid" id="A9B488"/>
<dbReference type="Proteomes" id="UP000000787">
    <property type="component" value="Chromosome"/>
</dbReference>
<dbReference type="GO" id="GO:0005886">
    <property type="term" value="C:plasma membrane"/>
    <property type="evidence" value="ECO:0007669"/>
    <property type="project" value="UniProtKB-SubCell"/>
</dbReference>
<dbReference type="GO" id="GO:0008137">
    <property type="term" value="F:NADH dehydrogenase (ubiquinone) activity"/>
    <property type="evidence" value="ECO:0007669"/>
    <property type="project" value="InterPro"/>
</dbReference>
<dbReference type="GO" id="GO:0050136">
    <property type="term" value="F:NADH:ubiquinone reductase (non-electrogenic) activity"/>
    <property type="evidence" value="ECO:0007669"/>
    <property type="project" value="UniProtKB-UniRule"/>
</dbReference>
<dbReference type="GO" id="GO:0048038">
    <property type="term" value="F:quinone binding"/>
    <property type="evidence" value="ECO:0007669"/>
    <property type="project" value="UniProtKB-KW"/>
</dbReference>
<dbReference type="GO" id="GO:0042773">
    <property type="term" value="P:ATP synthesis coupled electron transport"/>
    <property type="evidence" value="ECO:0007669"/>
    <property type="project" value="InterPro"/>
</dbReference>
<dbReference type="HAMAP" id="MF_00445">
    <property type="entry name" value="NDH1_NuoN_1"/>
    <property type="match status" value="1"/>
</dbReference>
<dbReference type="InterPro" id="IPR010096">
    <property type="entry name" value="NADH-Q_OxRdtase_suN/2"/>
</dbReference>
<dbReference type="InterPro" id="IPR001750">
    <property type="entry name" value="ND/Mrp_TM"/>
</dbReference>
<dbReference type="NCBIfam" id="TIGR01770">
    <property type="entry name" value="NDH_I_N"/>
    <property type="match status" value="1"/>
</dbReference>
<dbReference type="PANTHER" id="PTHR22773">
    <property type="entry name" value="NADH DEHYDROGENASE"/>
    <property type="match status" value="1"/>
</dbReference>
<dbReference type="Pfam" id="PF00361">
    <property type="entry name" value="Proton_antipo_M"/>
    <property type="match status" value="1"/>
</dbReference>
<evidence type="ECO:0000255" key="1">
    <source>
        <dbReference type="HAMAP-Rule" id="MF_00445"/>
    </source>
</evidence>
<reference key="1">
    <citation type="journal article" date="2011" name="Stand. Genomic Sci.">
        <title>Complete genome sequence of the filamentous gliding predatory bacterium Herpetosiphon aurantiacus type strain (114-95(T)).</title>
        <authorList>
            <person name="Kiss H."/>
            <person name="Nett M."/>
            <person name="Domin N."/>
            <person name="Martin K."/>
            <person name="Maresca J.A."/>
            <person name="Copeland A."/>
            <person name="Lapidus A."/>
            <person name="Lucas S."/>
            <person name="Berry K.W."/>
            <person name="Glavina Del Rio T."/>
            <person name="Dalin E."/>
            <person name="Tice H."/>
            <person name="Pitluck S."/>
            <person name="Richardson P."/>
            <person name="Bruce D."/>
            <person name="Goodwin L."/>
            <person name="Han C."/>
            <person name="Detter J.C."/>
            <person name="Schmutz J."/>
            <person name="Brettin T."/>
            <person name="Land M."/>
            <person name="Hauser L."/>
            <person name="Kyrpides N.C."/>
            <person name="Ivanova N."/>
            <person name="Goeker M."/>
            <person name="Woyke T."/>
            <person name="Klenk H.P."/>
            <person name="Bryant D.A."/>
        </authorList>
    </citation>
    <scope>NUCLEOTIDE SEQUENCE [LARGE SCALE GENOMIC DNA]</scope>
    <source>
        <strain>ATCC 23779 / DSM 785 / 114-95</strain>
    </source>
</reference>